<dbReference type="EC" id="2.8.4.4" evidence="1"/>
<dbReference type="EMBL" id="CP000880">
    <property type="protein sequence ID" value="ABX21949.1"/>
    <property type="molecule type" value="Genomic_DNA"/>
</dbReference>
<dbReference type="SMR" id="A9MIP6"/>
<dbReference type="STRING" id="41514.SARI_02072"/>
<dbReference type="KEGG" id="ses:SARI_02072"/>
<dbReference type="HOGENOM" id="CLU_018697_0_0_6"/>
<dbReference type="Proteomes" id="UP000002084">
    <property type="component" value="Chromosome"/>
</dbReference>
<dbReference type="GO" id="GO:0005829">
    <property type="term" value="C:cytosol"/>
    <property type="evidence" value="ECO:0007669"/>
    <property type="project" value="TreeGrafter"/>
</dbReference>
<dbReference type="GO" id="GO:0051539">
    <property type="term" value="F:4 iron, 4 sulfur cluster binding"/>
    <property type="evidence" value="ECO:0007669"/>
    <property type="project" value="UniProtKB-UniRule"/>
</dbReference>
<dbReference type="GO" id="GO:0035599">
    <property type="term" value="F:aspartic acid methylthiotransferase activity"/>
    <property type="evidence" value="ECO:0007669"/>
    <property type="project" value="TreeGrafter"/>
</dbReference>
<dbReference type="GO" id="GO:0046872">
    <property type="term" value="F:metal ion binding"/>
    <property type="evidence" value="ECO:0007669"/>
    <property type="project" value="UniProtKB-KW"/>
</dbReference>
<dbReference type="GO" id="GO:0103039">
    <property type="term" value="F:protein methylthiotransferase activity"/>
    <property type="evidence" value="ECO:0007669"/>
    <property type="project" value="UniProtKB-EC"/>
</dbReference>
<dbReference type="GO" id="GO:0006400">
    <property type="term" value="P:tRNA modification"/>
    <property type="evidence" value="ECO:0007669"/>
    <property type="project" value="InterPro"/>
</dbReference>
<dbReference type="CDD" id="cd01335">
    <property type="entry name" value="Radical_SAM"/>
    <property type="match status" value="1"/>
</dbReference>
<dbReference type="FunFam" id="2.40.50.140:FF:000060">
    <property type="entry name" value="Ribosomal protein S12 methylthiotransferase RimO"/>
    <property type="match status" value="1"/>
</dbReference>
<dbReference type="FunFam" id="3.40.50.12160:FF:000002">
    <property type="entry name" value="Ribosomal protein S12 methylthiotransferase RimO"/>
    <property type="match status" value="1"/>
</dbReference>
<dbReference type="FunFam" id="3.80.30.20:FF:000001">
    <property type="entry name" value="tRNA-2-methylthio-N(6)-dimethylallyladenosine synthase 2"/>
    <property type="match status" value="1"/>
</dbReference>
<dbReference type="Gene3D" id="3.40.50.12160">
    <property type="entry name" value="Methylthiotransferase, N-terminal domain"/>
    <property type="match status" value="1"/>
</dbReference>
<dbReference type="Gene3D" id="2.40.50.140">
    <property type="entry name" value="Nucleic acid-binding proteins"/>
    <property type="match status" value="1"/>
</dbReference>
<dbReference type="Gene3D" id="3.80.30.20">
    <property type="entry name" value="tm_1862 like domain"/>
    <property type="match status" value="1"/>
</dbReference>
<dbReference type="HAMAP" id="MF_01865">
    <property type="entry name" value="MTTase_RimO"/>
    <property type="match status" value="1"/>
</dbReference>
<dbReference type="InterPro" id="IPR006638">
    <property type="entry name" value="Elp3/MiaA/NifB-like_rSAM"/>
</dbReference>
<dbReference type="InterPro" id="IPR005839">
    <property type="entry name" value="Methylthiotransferase"/>
</dbReference>
<dbReference type="InterPro" id="IPR020612">
    <property type="entry name" value="Methylthiotransferase_CS"/>
</dbReference>
<dbReference type="InterPro" id="IPR013848">
    <property type="entry name" value="Methylthiotransferase_N"/>
</dbReference>
<dbReference type="InterPro" id="IPR038135">
    <property type="entry name" value="Methylthiotransferase_N_sf"/>
</dbReference>
<dbReference type="InterPro" id="IPR012340">
    <property type="entry name" value="NA-bd_OB-fold"/>
</dbReference>
<dbReference type="InterPro" id="IPR005840">
    <property type="entry name" value="Ribosomal_uS12_MeSTrfase_RimO"/>
</dbReference>
<dbReference type="InterPro" id="IPR007197">
    <property type="entry name" value="rSAM"/>
</dbReference>
<dbReference type="InterPro" id="IPR023404">
    <property type="entry name" value="rSAM_horseshoe"/>
</dbReference>
<dbReference type="InterPro" id="IPR002792">
    <property type="entry name" value="TRAM_dom"/>
</dbReference>
<dbReference type="NCBIfam" id="TIGR01125">
    <property type="entry name" value="30S ribosomal protein S12 methylthiotransferase RimO"/>
    <property type="match status" value="1"/>
</dbReference>
<dbReference type="NCBIfam" id="TIGR00089">
    <property type="entry name" value="MiaB/RimO family radical SAM methylthiotransferase"/>
    <property type="match status" value="1"/>
</dbReference>
<dbReference type="PANTHER" id="PTHR43837">
    <property type="entry name" value="RIBOSOMAL PROTEIN S12 METHYLTHIOTRANSFERASE RIMO"/>
    <property type="match status" value="1"/>
</dbReference>
<dbReference type="PANTHER" id="PTHR43837:SF1">
    <property type="entry name" value="RIBOSOMAL PROTEIN US12 METHYLTHIOTRANSFERASE RIMO"/>
    <property type="match status" value="1"/>
</dbReference>
<dbReference type="Pfam" id="PF04055">
    <property type="entry name" value="Radical_SAM"/>
    <property type="match status" value="1"/>
</dbReference>
<dbReference type="Pfam" id="PF18693">
    <property type="entry name" value="TRAM_2"/>
    <property type="match status" value="1"/>
</dbReference>
<dbReference type="Pfam" id="PF00919">
    <property type="entry name" value="UPF0004"/>
    <property type="match status" value="1"/>
</dbReference>
<dbReference type="SFLD" id="SFLDG01082">
    <property type="entry name" value="B12-binding_domain_containing"/>
    <property type="match status" value="1"/>
</dbReference>
<dbReference type="SFLD" id="SFLDS00029">
    <property type="entry name" value="Radical_SAM"/>
    <property type="match status" value="1"/>
</dbReference>
<dbReference type="SFLD" id="SFLDF00274">
    <property type="entry name" value="ribosomal_protein_S12_methylth"/>
    <property type="match status" value="1"/>
</dbReference>
<dbReference type="SMART" id="SM00729">
    <property type="entry name" value="Elp3"/>
    <property type="match status" value="1"/>
</dbReference>
<dbReference type="SUPFAM" id="SSF102114">
    <property type="entry name" value="Radical SAM enzymes"/>
    <property type="match status" value="1"/>
</dbReference>
<dbReference type="PROSITE" id="PS51449">
    <property type="entry name" value="MTTASE_N"/>
    <property type="match status" value="1"/>
</dbReference>
<dbReference type="PROSITE" id="PS01278">
    <property type="entry name" value="MTTASE_RADICAL"/>
    <property type="match status" value="1"/>
</dbReference>
<dbReference type="PROSITE" id="PS51918">
    <property type="entry name" value="RADICAL_SAM"/>
    <property type="match status" value="1"/>
</dbReference>
<dbReference type="PROSITE" id="PS50926">
    <property type="entry name" value="TRAM"/>
    <property type="match status" value="1"/>
</dbReference>
<gene>
    <name evidence="1" type="primary">rimO</name>
    <name type="ordered locus">SARI_02072</name>
</gene>
<proteinExistence type="inferred from homology"/>
<comment type="function">
    <text evidence="1">Catalyzes the methylthiolation of an aspartic acid residue of ribosomal protein uS12.</text>
</comment>
<comment type="catalytic activity">
    <reaction evidence="1">
        <text>L-aspartate(89)-[ribosomal protein uS12]-hydrogen + (sulfur carrier)-SH + AH2 + 2 S-adenosyl-L-methionine = 3-methylsulfanyl-L-aspartate(89)-[ribosomal protein uS12]-hydrogen + (sulfur carrier)-H + 5'-deoxyadenosine + L-methionine + A + S-adenosyl-L-homocysteine + 2 H(+)</text>
        <dbReference type="Rhea" id="RHEA:37087"/>
        <dbReference type="Rhea" id="RHEA-COMP:10460"/>
        <dbReference type="Rhea" id="RHEA-COMP:10461"/>
        <dbReference type="Rhea" id="RHEA-COMP:14737"/>
        <dbReference type="Rhea" id="RHEA-COMP:14739"/>
        <dbReference type="ChEBI" id="CHEBI:13193"/>
        <dbReference type="ChEBI" id="CHEBI:15378"/>
        <dbReference type="ChEBI" id="CHEBI:17319"/>
        <dbReference type="ChEBI" id="CHEBI:17499"/>
        <dbReference type="ChEBI" id="CHEBI:29917"/>
        <dbReference type="ChEBI" id="CHEBI:29961"/>
        <dbReference type="ChEBI" id="CHEBI:57844"/>
        <dbReference type="ChEBI" id="CHEBI:57856"/>
        <dbReference type="ChEBI" id="CHEBI:59789"/>
        <dbReference type="ChEBI" id="CHEBI:64428"/>
        <dbReference type="ChEBI" id="CHEBI:73599"/>
        <dbReference type="EC" id="2.8.4.4"/>
    </reaction>
</comment>
<comment type="cofactor">
    <cofactor evidence="1">
        <name>[4Fe-4S] cluster</name>
        <dbReference type="ChEBI" id="CHEBI:49883"/>
    </cofactor>
    <text evidence="1">Binds 2 [4Fe-4S] clusters. One cluster is coordinated with 3 cysteines and an exchangeable S-adenosyl-L-methionine.</text>
</comment>
<comment type="subcellular location">
    <subcellularLocation>
        <location evidence="1">Cytoplasm</location>
    </subcellularLocation>
</comment>
<comment type="similarity">
    <text evidence="1">Belongs to the methylthiotransferase family. RimO subfamily.</text>
</comment>
<sequence>MSNVTHQPKIGFVSLGCPKNLVDSERILTELRTEGYDVVPRYDDADMVIVNTCGFIDSAVQESLEAIGEALNENGKVIVTGCLGAKEDQIREVHPKVLEITGPHSYEQVLQHVHHYVPKPKHNPFLSLVPEQGVKLTPRHYAYLKISEGCNHRCTFCIIPSMRGDLVSRPIGDVLSEAKRLVDAGVKEILVISQDTSAYGVDVKHRTGFHNGEPVKTSMASLCEQLSKLGVWTRLHYVYPYPHVDDVIPLMAEGKILPYLDIPLQHASPRILKLMKRPGSVDRQLARIKQWRDICPELTLRSTFIVGFPGETEEDFQMLLDFLKEARLDRVGCFKYSPVEGAGANELPDQVPEEVKEERWNRFMQLQQQISAERLQEKVGREILVIVDEVDEEGAIGRSMADAPEIDGAVYLNGETNVKPGDIVRVKVENADEYDLWGSRV</sequence>
<protein>
    <recommendedName>
        <fullName evidence="1">Ribosomal protein uS12 methylthiotransferase RimO</fullName>
        <shortName evidence="1">uS12 MTTase</shortName>
        <shortName evidence="1">uS12 methylthiotransferase</shortName>
        <ecNumber evidence="1">2.8.4.4</ecNumber>
    </recommendedName>
    <alternativeName>
        <fullName evidence="1">Ribosomal protein uS12 (aspartate-C(3))-methylthiotransferase</fullName>
    </alternativeName>
    <alternativeName>
        <fullName evidence="1">Ribosome maturation factor RimO</fullName>
    </alternativeName>
</protein>
<name>RIMO_SALAR</name>
<reference key="1">
    <citation type="submission" date="2007-11" db="EMBL/GenBank/DDBJ databases">
        <authorList>
            <consortium name="The Salmonella enterica serovar Arizonae Genome Sequencing Project"/>
            <person name="McClelland M."/>
            <person name="Sanderson E.K."/>
            <person name="Porwollik S."/>
            <person name="Spieth J."/>
            <person name="Clifton W.S."/>
            <person name="Fulton R."/>
            <person name="Chunyan W."/>
            <person name="Wollam A."/>
            <person name="Shah N."/>
            <person name="Pepin K."/>
            <person name="Bhonagiri V."/>
            <person name="Nash W."/>
            <person name="Johnson M."/>
            <person name="Thiruvilangam P."/>
            <person name="Wilson R."/>
        </authorList>
    </citation>
    <scope>NUCLEOTIDE SEQUENCE [LARGE SCALE GENOMIC DNA]</scope>
    <source>
        <strain>ATCC BAA-731 / CDC346-86 / RSK2980</strain>
    </source>
</reference>
<accession>A9MIP6</accession>
<feature type="chain" id="PRO_0000374986" description="Ribosomal protein uS12 methylthiotransferase RimO">
    <location>
        <begin position="1"/>
        <end position="441"/>
    </location>
</feature>
<feature type="domain" description="MTTase N-terminal" evidence="1">
    <location>
        <begin position="8"/>
        <end position="118"/>
    </location>
</feature>
<feature type="domain" description="Radical SAM core" evidence="2">
    <location>
        <begin position="136"/>
        <end position="373"/>
    </location>
</feature>
<feature type="domain" description="TRAM" evidence="1">
    <location>
        <begin position="376"/>
        <end position="441"/>
    </location>
</feature>
<feature type="binding site" evidence="1">
    <location>
        <position position="17"/>
    </location>
    <ligand>
        <name>[4Fe-4S] cluster</name>
        <dbReference type="ChEBI" id="CHEBI:49883"/>
        <label>1</label>
    </ligand>
</feature>
<feature type="binding site" evidence="1">
    <location>
        <position position="53"/>
    </location>
    <ligand>
        <name>[4Fe-4S] cluster</name>
        <dbReference type="ChEBI" id="CHEBI:49883"/>
        <label>1</label>
    </ligand>
</feature>
<feature type="binding site" evidence="1">
    <location>
        <position position="82"/>
    </location>
    <ligand>
        <name>[4Fe-4S] cluster</name>
        <dbReference type="ChEBI" id="CHEBI:49883"/>
        <label>1</label>
    </ligand>
</feature>
<feature type="binding site" evidence="1">
    <location>
        <position position="150"/>
    </location>
    <ligand>
        <name>[4Fe-4S] cluster</name>
        <dbReference type="ChEBI" id="CHEBI:49883"/>
        <label>2</label>
        <note>4Fe-4S-S-AdoMet</note>
    </ligand>
</feature>
<feature type="binding site" evidence="1">
    <location>
        <position position="154"/>
    </location>
    <ligand>
        <name>[4Fe-4S] cluster</name>
        <dbReference type="ChEBI" id="CHEBI:49883"/>
        <label>2</label>
        <note>4Fe-4S-S-AdoMet</note>
    </ligand>
</feature>
<feature type="binding site" evidence="1">
    <location>
        <position position="157"/>
    </location>
    <ligand>
        <name>[4Fe-4S] cluster</name>
        <dbReference type="ChEBI" id="CHEBI:49883"/>
        <label>2</label>
        <note>4Fe-4S-S-AdoMet</note>
    </ligand>
</feature>
<keyword id="KW-0004">4Fe-4S</keyword>
<keyword id="KW-0963">Cytoplasm</keyword>
<keyword id="KW-0408">Iron</keyword>
<keyword id="KW-0411">Iron-sulfur</keyword>
<keyword id="KW-0479">Metal-binding</keyword>
<keyword id="KW-1185">Reference proteome</keyword>
<keyword id="KW-0949">S-adenosyl-L-methionine</keyword>
<keyword id="KW-0808">Transferase</keyword>
<organism>
    <name type="scientific">Salmonella arizonae (strain ATCC BAA-731 / CDC346-86 / RSK2980)</name>
    <dbReference type="NCBI Taxonomy" id="41514"/>
    <lineage>
        <taxon>Bacteria</taxon>
        <taxon>Pseudomonadati</taxon>
        <taxon>Pseudomonadota</taxon>
        <taxon>Gammaproteobacteria</taxon>
        <taxon>Enterobacterales</taxon>
        <taxon>Enterobacteriaceae</taxon>
        <taxon>Salmonella</taxon>
    </lineage>
</organism>
<evidence type="ECO:0000255" key="1">
    <source>
        <dbReference type="HAMAP-Rule" id="MF_01865"/>
    </source>
</evidence>
<evidence type="ECO:0000255" key="2">
    <source>
        <dbReference type="PROSITE-ProRule" id="PRU01266"/>
    </source>
</evidence>